<comment type="function">
    <text evidence="1">Binds as a heterodimer with protein bS6 to the central domain of the 16S rRNA, where it helps stabilize the platform of the 30S subunit.</text>
</comment>
<comment type="subunit">
    <text evidence="1">Part of the 30S ribosomal subunit. Forms a tight heterodimer with protein bS6.</text>
</comment>
<comment type="similarity">
    <text evidence="1">Belongs to the bacterial ribosomal protein bS18 family.</text>
</comment>
<evidence type="ECO:0000255" key="1">
    <source>
        <dbReference type="HAMAP-Rule" id="MF_00270"/>
    </source>
</evidence>
<evidence type="ECO:0000305" key="2"/>
<sequence>MAQQRRGGFKRRKKVDFIAANKIEYVDYKDTELLSRFVSERGKILPRRVTGTSAKNQRKVTTAIKRARVMALMPYVNED</sequence>
<protein>
    <recommendedName>
        <fullName evidence="1">Small ribosomal subunit protein bS18</fullName>
    </recommendedName>
    <alternativeName>
        <fullName evidence="2">30S ribosomal protein S18</fullName>
    </alternativeName>
</protein>
<organism>
    <name type="scientific">Streptococcus pyogenes serotype M4 (strain MGAS10750)</name>
    <dbReference type="NCBI Taxonomy" id="370554"/>
    <lineage>
        <taxon>Bacteria</taxon>
        <taxon>Bacillati</taxon>
        <taxon>Bacillota</taxon>
        <taxon>Bacilli</taxon>
        <taxon>Lactobacillales</taxon>
        <taxon>Streptococcaceae</taxon>
        <taxon>Streptococcus</taxon>
    </lineage>
</organism>
<feature type="chain" id="PRO_1000003629" description="Small ribosomal subunit protein bS18">
    <location>
        <begin position="1"/>
        <end position="79"/>
    </location>
</feature>
<reference key="1">
    <citation type="journal article" date="2006" name="Proc. Natl. Acad. Sci. U.S.A.">
        <title>Molecular genetic anatomy of inter- and intraserotype variation in the human bacterial pathogen group A Streptococcus.</title>
        <authorList>
            <person name="Beres S.B."/>
            <person name="Richter E.W."/>
            <person name="Nagiec M.J."/>
            <person name="Sumby P."/>
            <person name="Porcella S.F."/>
            <person name="DeLeo F.R."/>
            <person name="Musser J.M."/>
        </authorList>
    </citation>
    <scope>NUCLEOTIDE SEQUENCE [LARGE SCALE GENOMIC DNA]</scope>
    <source>
        <strain>MGAS10750</strain>
    </source>
</reference>
<proteinExistence type="inferred from homology"/>
<gene>
    <name evidence="1" type="primary">rpsR</name>
    <name type="ordered locus">MGAS10750_Spy1612</name>
</gene>
<dbReference type="EMBL" id="CP000262">
    <property type="protein sequence ID" value="ABF38562.1"/>
    <property type="molecule type" value="Genomic_DNA"/>
</dbReference>
<dbReference type="SMR" id="Q1J524"/>
<dbReference type="KEGG" id="spi:MGAS10750_Spy1612"/>
<dbReference type="HOGENOM" id="CLU_148710_2_2_9"/>
<dbReference type="Proteomes" id="UP000002434">
    <property type="component" value="Chromosome"/>
</dbReference>
<dbReference type="GO" id="GO:0022627">
    <property type="term" value="C:cytosolic small ribosomal subunit"/>
    <property type="evidence" value="ECO:0007669"/>
    <property type="project" value="TreeGrafter"/>
</dbReference>
<dbReference type="GO" id="GO:0070181">
    <property type="term" value="F:small ribosomal subunit rRNA binding"/>
    <property type="evidence" value="ECO:0007669"/>
    <property type="project" value="TreeGrafter"/>
</dbReference>
<dbReference type="GO" id="GO:0003735">
    <property type="term" value="F:structural constituent of ribosome"/>
    <property type="evidence" value="ECO:0007669"/>
    <property type="project" value="InterPro"/>
</dbReference>
<dbReference type="GO" id="GO:0006412">
    <property type="term" value="P:translation"/>
    <property type="evidence" value="ECO:0007669"/>
    <property type="project" value="UniProtKB-UniRule"/>
</dbReference>
<dbReference type="FunFam" id="4.10.640.10:FF:000003">
    <property type="entry name" value="30S ribosomal protein S18"/>
    <property type="match status" value="1"/>
</dbReference>
<dbReference type="Gene3D" id="4.10.640.10">
    <property type="entry name" value="Ribosomal protein S18"/>
    <property type="match status" value="1"/>
</dbReference>
<dbReference type="HAMAP" id="MF_00270">
    <property type="entry name" value="Ribosomal_bS18"/>
    <property type="match status" value="1"/>
</dbReference>
<dbReference type="InterPro" id="IPR001648">
    <property type="entry name" value="Ribosomal_bS18"/>
</dbReference>
<dbReference type="InterPro" id="IPR018275">
    <property type="entry name" value="Ribosomal_bS18_CS"/>
</dbReference>
<dbReference type="InterPro" id="IPR036870">
    <property type="entry name" value="Ribosomal_bS18_sf"/>
</dbReference>
<dbReference type="NCBIfam" id="TIGR00165">
    <property type="entry name" value="S18"/>
    <property type="match status" value="1"/>
</dbReference>
<dbReference type="PANTHER" id="PTHR13479">
    <property type="entry name" value="30S RIBOSOMAL PROTEIN S18"/>
    <property type="match status" value="1"/>
</dbReference>
<dbReference type="PANTHER" id="PTHR13479:SF40">
    <property type="entry name" value="SMALL RIBOSOMAL SUBUNIT PROTEIN BS18M"/>
    <property type="match status" value="1"/>
</dbReference>
<dbReference type="Pfam" id="PF01084">
    <property type="entry name" value="Ribosomal_S18"/>
    <property type="match status" value="1"/>
</dbReference>
<dbReference type="PRINTS" id="PR00974">
    <property type="entry name" value="RIBOSOMALS18"/>
</dbReference>
<dbReference type="SUPFAM" id="SSF46911">
    <property type="entry name" value="Ribosomal protein S18"/>
    <property type="match status" value="1"/>
</dbReference>
<dbReference type="PROSITE" id="PS00057">
    <property type="entry name" value="RIBOSOMAL_S18"/>
    <property type="match status" value="1"/>
</dbReference>
<keyword id="KW-0687">Ribonucleoprotein</keyword>
<keyword id="KW-0689">Ribosomal protein</keyword>
<keyword id="KW-0694">RNA-binding</keyword>
<keyword id="KW-0699">rRNA-binding</keyword>
<name>RS18_STRPF</name>
<accession>Q1J524</accession>